<organism>
    <name type="scientific">Shigella boydii serotype 18 (strain CDC 3083-94 / BS512)</name>
    <dbReference type="NCBI Taxonomy" id="344609"/>
    <lineage>
        <taxon>Bacteria</taxon>
        <taxon>Pseudomonadati</taxon>
        <taxon>Pseudomonadota</taxon>
        <taxon>Gammaproteobacteria</taxon>
        <taxon>Enterobacterales</taxon>
        <taxon>Enterobacteriaceae</taxon>
        <taxon>Shigella</taxon>
    </lineage>
</organism>
<evidence type="ECO:0000255" key="1">
    <source>
        <dbReference type="HAMAP-Rule" id="MF_01047"/>
    </source>
</evidence>
<gene>
    <name evidence="1" type="primary">ycfP</name>
    <name type="ordered locus">SbBS512_E2215</name>
</gene>
<protein>
    <recommendedName>
        <fullName evidence="1">UPF0227 protein YcfP</fullName>
    </recommendedName>
</protein>
<keyword id="KW-1185">Reference proteome</keyword>
<dbReference type="EMBL" id="CP001063">
    <property type="protein sequence ID" value="ACD09668.1"/>
    <property type="molecule type" value="Genomic_DNA"/>
</dbReference>
<dbReference type="RefSeq" id="WP_000587933.1">
    <property type="nucleotide sequence ID" value="NC_010658.1"/>
</dbReference>
<dbReference type="SMR" id="B2U512"/>
<dbReference type="STRING" id="344609.SbBS512_E2215"/>
<dbReference type="ESTHER" id="shifl-ycfp">
    <property type="family name" value="abh_upf00227"/>
</dbReference>
<dbReference type="GeneID" id="93776300"/>
<dbReference type="KEGG" id="sbc:SbBS512_E2215"/>
<dbReference type="HOGENOM" id="CLU_128769_0_0_6"/>
<dbReference type="Proteomes" id="UP000001030">
    <property type="component" value="Chromosome"/>
</dbReference>
<dbReference type="FunFam" id="3.40.50.1820:FF:000007">
    <property type="entry name" value="UPF0227 protein YcfP"/>
    <property type="match status" value="1"/>
</dbReference>
<dbReference type="Gene3D" id="3.40.50.1820">
    <property type="entry name" value="alpha/beta hydrolase"/>
    <property type="match status" value="1"/>
</dbReference>
<dbReference type="HAMAP" id="MF_01047">
    <property type="entry name" value="UPF0227"/>
    <property type="match status" value="1"/>
</dbReference>
<dbReference type="InterPro" id="IPR029058">
    <property type="entry name" value="AB_hydrolase_fold"/>
</dbReference>
<dbReference type="InterPro" id="IPR022987">
    <property type="entry name" value="UPF0227"/>
</dbReference>
<dbReference type="InterPro" id="IPR008886">
    <property type="entry name" value="UPF0227/Esterase_YqiA"/>
</dbReference>
<dbReference type="NCBIfam" id="NF003431">
    <property type="entry name" value="PRK04940.1"/>
    <property type="match status" value="1"/>
</dbReference>
<dbReference type="PANTHER" id="PTHR35602">
    <property type="entry name" value="ESTERASE YQIA-RELATED"/>
    <property type="match status" value="1"/>
</dbReference>
<dbReference type="PANTHER" id="PTHR35602:SF2">
    <property type="entry name" value="UPF0227 PROTEIN YCFP"/>
    <property type="match status" value="1"/>
</dbReference>
<dbReference type="Pfam" id="PF05728">
    <property type="entry name" value="UPF0227"/>
    <property type="match status" value="1"/>
</dbReference>
<dbReference type="SUPFAM" id="SSF53474">
    <property type="entry name" value="alpha/beta-Hydrolases"/>
    <property type="match status" value="1"/>
</dbReference>
<name>YCFP_SHIB3</name>
<accession>B2U512</accession>
<comment type="similarity">
    <text evidence="1">Belongs to the UPF0227 family.</text>
</comment>
<proteinExistence type="inferred from homology"/>
<sequence>MIIYLHGFDSNSPGNHEKVLQLQFIDPDVRLISYSTRHPKHDMQHLLKEVDKMLQLNVDERPLICGVGLGGYWAERIGFLCDIRQVIFNPNLFPYENMEGKIDRPEEYADIATKCVTNFREKNRDRCLVILSRNDEALNSQRTSEELHHYYEIVWDEEQTHKFKNISPHLQRIKAFKTLG</sequence>
<reference key="1">
    <citation type="submission" date="2008-05" db="EMBL/GenBank/DDBJ databases">
        <title>Complete sequence of Shigella boydii serotype 18 strain BS512.</title>
        <authorList>
            <person name="Rasko D.A."/>
            <person name="Rosovitz M."/>
            <person name="Maurelli A.T."/>
            <person name="Myers G."/>
            <person name="Seshadri R."/>
            <person name="Cer R."/>
            <person name="Jiang L."/>
            <person name="Ravel J."/>
            <person name="Sebastian Y."/>
        </authorList>
    </citation>
    <scope>NUCLEOTIDE SEQUENCE [LARGE SCALE GENOMIC DNA]</scope>
    <source>
        <strain>CDC 3083-94 / BS512</strain>
    </source>
</reference>
<feature type="chain" id="PRO_1000136203" description="UPF0227 protein YcfP">
    <location>
        <begin position="1"/>
        <end position="180"/>
    </location>
</feature>